<organism>
    <name type="scientific">Saccharolobus islandicus (strain M.14.25 / Kamchatka #1)</name>
    <name type="common">Sulfolobus islandicus</name>
    <dbReference type="NCBI Taxonomy" id="427317"/>
    <lineage>
        <taxon>Archaea</taxon>
        <taxon>Thermoproteota</taxon>
        <taxon>Thermoprotei</taxon>
        <taxon>Sulfolobales</taxon>
        <taxon>Sulfolobaceae</taxon>
        <taxon>Saccharolobus</taxon>
    </lineage>
</organism>
<name>PDXT_SACI4</name>
<feature type="chain" id="PRO_1000215724" description="Pyridoxal 5'-phosphate synthase subunit PdxT">
    <location>
        <begin position="1"/>
        <end position="200"/>
    </location>
</feature>
<feature type="active site" description="Nucleophile" evidence="1">
    <location>
        <position position="84"/>
    </location>
</feature>
<feature type="active site" description="Charge relay system" evidence="1">
    <location>
        <position position="181"/>
    </location>
</feature>
<feature type="active site" description="Charge relay system" evidence="1">
    <location>
        <position position="183"/>
    </location>
</feature>
<feature type="binding site" evidence="1">
    <location>
        <begin position="52"/>
        <end position="54"/>
    </location>
    <ligand>
        <name>L-glutamine</name>
        <dbReference type="ChEBI" id="CHEBI:58359"/>
    </ligand>
</feature>
<feature type="binding site" evidence="1">
    <location>
        <position position="116"/>
    </location>
    <ligand>
        <name>L-glutamine</name>
        <dbReference type="ChEBI" id="CHEBI:58359"/>
    </ligand>
</feature>
<feature type="binding site" evidence="1">
    <location>
        <begin position="145"/>
        <end position="146"/>
    </location>
    <ligand>
        <name>L-glutamine</name>
        <dbReference type="ChEBI" id="CHEBI:58359"/>
    </ligand>
</feature>
<protein>
    <recommendedName>
        <fullName evidence="1">Pyridoxal 5'-phosphate synthase subunit PdxT</fullName>
        <ecNumber evidence="1">4.3.3.6</ecNumber>
    </recommendedName>
    <alternativeName>
        <fullName evidence="1">Pdx2</fullName>
    </alternativeName>
    <alternativeName>
        <fullName evidence="1">Pyridoxal 5'-phosphate synthase glutaminase subunit</fullName>
        <ecNumber evidence="1">3.5.1.2</ecNumber>
    </alternativeName>
</protein>
<accession>C3MW85</accession>
<gene>
    <name evidence="1" type="primary">pdxT</name>
    <name type="ordered locus">M1425_1558</name>
</gene>
<sequence length="200" mass="21720">MKIGIIAYQGSFEEHYLQLKRAFDKLSINGEITPVKIPKDLKDIDGVIIPGGESTTIGLVAKRLGILDELKEKITSGLPVMGTCAGAIMLAKEVSDAKVGKTSQPLIGAMNISIIRNYYGRQRESFEAIIDLSKIGKGKANVVFIRAPAITKLWGKAQSLAELNGVTVLAEENNILATTFHPELSDTTSIHEYFLHLVKG</sequence>
<proteinExistence type="inferred from homology"/>
<dbReference type="EC" id="4.3.3.6" evidence="1"/>
<dbReference type="EC" id="3.5.1.2" evidence="1"/>
<dbReference type="EMBL" id="CP001400">
    <property type="protein sequence ID" value="ACP38307.1"/>
    <property type="molecule type" value="Genomic_DNA"/>
</dbReference>
<dbReference type="RefSeq" id="WP_012711552.1">
    <property type="nucleotide sequence ID" value="NC_012588.1"/>
</dbReference>
<dbReference type="SMR" id="C3MW85"/>
<dbReference type="GeneID" id="84061869"/>
<dbReference type="KEGG" id="sia:M1425_1558"/>
<dbReference type="HOGENOM" id="CLU_069674_2_0_2"/>
<dbReference type="UniPathway" id="UPA00245"/>
<dbReference type="Proteomes" id="UP000001350">
    <property type="component" value="Chromosome"/>
</dbReference>
<dbReference type="GO" id="GO:0005829">
    <property type="term" value="C:cytosol"/>
    <property type="evidence" value="ECO:0007669"/>
    <property type="project" value="TreeGrafter"/>
</dbReference>
<dbReference type="GO" id="GO:1903600">
    <property type="term" value="C:glutaminase complex"/>
    <property type="evidence" value="ECO:0007669"/>
    <property type="project" value="TreeGrafter"/>
</dbReference>
<dbReference type="GO" id="GO:0004359">
    <property type="term" value="F:glutaminase activity"/>
    <property type="evidence" value="ECO:0007669"/>
    <property type="project" value="UniProtKB-UniRule"/>
</dbReference>
<dbReference type="GO" id="GO:0036381">
    <property type="term" value="F:pyridoxal 5'-phosphate synthase (glutamine hydrolysing) activity"/>
    <property type="evidence" value="ECO:0007669"/>
    <property type="project" value="UniProtKB-UniRule"/>
</dbReference>
<dbReference type="GO" id="GO:0006543">
    <property type="term" value="P:glutamine catabolic process"/>
    <property type="evidence" value="ECO:0007669"/>
    <property type="project" value="UniProtKB-UniRule"/>
</dbReference>
<dbReference type="GO" id="GO:0042823">
    <property type="term" value="P:pyridoxal phosphate biosynthetic process"/>
    <property type="evidence" value="ECO:0007669"/>
    <property type="project" value="UniProtKB-UniRule"/>
</dbReference>
<dbReference type="GO" id="GO:0008614">
    <property type="term" value="P:pyridoxine metabolic process"/>
    <property type="evidence" value="ECO:0007669"/>
    <property type="project" value="TreeGrafter"/>
</dbReference>
<dbReference type="CDD" id="cd01749">
    <property type="entry name" value="GATase1_PB"/>
    <property type="match status" value="1"/>
</dbReference>
<dbReference type="FunFam" id="3.40.50.880:FF:000041">
    <property type="entry name" value="Glutamine amidotransferase subunit pdxT, putative"/>
    <property type="match status" value="1"/>
</dbReference>
<dbReference type="Gene3D" id="3.40.50.880">
    <property type="match status" value="1"/>
</dbReference>
<dbReference type="HAMAP" id="MF_01615">
    <property type="entry name" value="PdxT"/>
    <property type="match status" value="1"/>
</dbReference>
<dbReference type="InterPro" id="IPR029062">
    <property type="entry name" value="Class_I_gatase-like"/>
</dbReference>
<dbReference type="InterPro" id="IPR002161">
    <property type="entry name" value="PdxT/SNO"/>
</dbReference>
<dbReference type="InterPro" id="IPR021196">
    <property type="entry name" value="PdxT/SNO_CS"/>
</dbReference>
<dbReference type="NCBIfam" id="TIGR03800">
    <property type="entry name" value="PLP_synth_Pdx2"/>
    <property type="match status" value="1"/>
</dbReference>
<dbReference type="PANTHER" id="PTHR31559">
    <property type="entry name" value="PYRIDOXAL 5'-PHOSPHATE SYNTHASE SUBUNIT SNO"/>
    <property type="match status" value="1"/>
</dbReference>
<dbReference type="PANTHER" id="PTHR31559:SF0">
    <property type="entry name" value="PYRIDOXAL 5'-PHOSPHATE SYNTHASE SUBUNIT SNO1-RELATED"/>
    <property type="match status" value="1"/>
</dbReference>
<dbReference type="Pfam" id="PF01174">
    <property type="entry name" value="SNO"/>
    <property type="match status" value="1"/>
</dbReference>
<dbReference type="PIRSF" id="PIRSF005639">
    <property type="entry name" value="Glut_amidoT_SNO"/>
    <property type="match status" value="1"/>
</dbReference>
<dbReference type="SUPFAM" id="SSF52317">
    <property type="entry name" value="Class I glutamine amidotransferase-like"/>
    <property type="match status" value="1"/>
</dbReference>
<dbReference type="PROSITE" id="PS01236">
    <property type="entry name" value="PDXT_SNO_1"/>
    <property type="match status" value="1"/>
</dbReference>
<dbReference type="PROSITE" id="PS51130">
    <property type="entry name" value="PDXT_SNO_2"/>
    <property type="match status" value="1"/>
</dbReference>
<evidence type="ECO:0000255" key="1">
    <source>
        <dbReference type="HAMAP-Rule" id="MF_01615"/>
    </source>
</evidence>
<keyword id="KW-0315">Glutamine amidotransferase</keyword>
<keyword id="KW-0378">Hydrolase</keyword>
<keyword id="KW-0456">Lyase</keyword>
<keyword id="KW-0663">Pyridoxal phosphate</keyword>
<reference key="1">
    <citation type="journal article" date="2009" name="Proc. Natl. Acad. Sci. U.S.A.">
        <title>Biogeography of the Sulfolobus islandicus pan-genome.</title>
        <authorList>
            <person name="Reno M.L."/>
            <person name="Held N.L."/>
            <person name="Fields C.J."/>
            <person name="Burke P.V."/>
            <person name="Whitaker R.J."/>
        </authorList>
    </citation>
    <scope>NUCLEOTIDE SEQUENCE [LARGE SCALE GENOMIC DNA]</scope>
    <source>
        <strain>M.14.25 / Kamchatka #1</strain>
    </source>
</reference>
<comment type="function">
    <text evidence="1">Catalyzes the hydrolysis of glutamine to glutamate and ammonia as part of the biosynthesis of pyridoxal 5'-phosphate. The resulting ammonia molecule is channeled to the active site of PdxS.</text>
</comment>
<comment type="catalytic activity">
    <reaction evidence="1">
        <text>aldehydo-D-ribose 5-phosphate + D-glyceraldehyde 3-phosphate + L-glutamine = pyridoxal 5'-phosphate + L-glutamate + phosphate + 3 H2O + H(+)</text>
        <dbReference type="Rhea" id="RHEA:31507"/>
        <dbReference type="ChEBI" id="CHEBI:15377"/>
        <dbReference type="ChEBI" id="CHEBI:15378"/>
        <dbReference type="ChEBI" id="CHEBI:29985"/>
        <dbReference type="ChEBI" id="CHEBI:43474"/>
        <dbReference type="ChEBI" id="CHEBI:58273"/>
        <dbReference type="ChEBI" id="CHEBI:58359"/>
        <dbReference type="ChEBI" id="CHEBI:59776"/>
        <dbReference type="ChEBI" id="CHEBI:597326"/>
        <dbReference type="EC" id="4.3.3.6"/>
    </reaction>
</comment>
<comment type="catalytic activity">
    <reaction evidence="1">
        <text>L-glutamine + H2O = L-glutamate + NH4(+)</text>
        <dbReference type="Rhea" id="RHEA:15889"/>
        <dbReference type="ChEBI" id="CHEBI:15377"/>
        <dbReference type="ChEBI" id="CHEBI:28938"/>
        <dbReference type="ChEBI" id="CHEBI:29985"/>
        <dbReference type="ChEBI" id="CHEBI:58359"/>
        <dbReference type="EC" id="3.5.1.2"/>
    </reaction>
</comment>
<comment type="pathway">
    <text evidence="1">Cofactor biosynthesis; pyridoxal 5'-phosphate biosynthesis.</text>
</comment>
<comment type="subunit">
    <text evidence="1">In the presence of PdxS, forms a dodecamer of heterodimers. Only shows activity in the heterodimer.</text>
</comment>
<comment type="similarity">
    <text evidence="1">Belongs to the glutaminase PdxT/SNO family.</text>
</comment>